<protein>
    <recommendedName>
        <fullName evidence="1">2-isopropylmalate synthase</fullName>
        <ecNumber evidence="1">2.3.3.13</ecNumber>
    </recommendedName>
    <alternativeName>
        <fullName evidence="1">Alpha-IPM synthase</fullName>
    </alternativeName>
    <alternativeName>
        <fullName evidence="1">Alpha-isopropylmalate synthase</fullName>
    </alternativeName>
</protein>
<organism>
    <name type="scientific">Bacillus cereus (strain AH820)</name>
    <dbReference type="NCBI Taxonomy" id="405535"/>
    <lineage>
        <taxon>Bacteria</taxon>
        <taxon>Bacillati</taxon>
        <taxon>Bacillota</taxon>
        <taxon>Bacilli</taxon>
        <taxon>Bacillales</taxon>
        <taxon>Bacillaceae</taxon>
        <taxon>Bacillus</taxon>
        <taxon>Bacillus cereus group</taxon>
    </lineage>
</organism>
<proteinExistence type="inferred from homology"/>
<dbReference type="EC" id="2.3.3.13" evidence="1"/>
<dbReference type="EMBL" id="CP001283">
    <property type="protein sequence ID" value="ACK88351.1"/>
    <property type="molecule type" value="Genomic_DNA"/>
</dbReference>
<dbReference type="RefSeq" id="WP_000809584.1">
    <property type="nucleotide sequence ID" value="NC_011773.1"/>
</dbReference>
<dbReference type="SMR" id="B7JFY5"/>
<dbReference type="KEGG" id="bcu:BCAH820_1491"/>
<dbReference type="HOGENOM" id="CLU_022158_0_1_9"/>
<dbReference type="UniPathway" id="UPA00048">
    <property type="reaction ID" value="UER00070"/>
</dbReference>
<dbReference type="Proteomes" id="UP000001363">
    <property type="component" value="Chromosome"/>
</dbReference>
<dbReference type="GO" id="GO:0005737">
    <property type="term" value="C:cytoplasm"/>
    <property type="evidence" value="ECO:0007669"/>
    <property type="project" value="UniProtKB-SubCell"/>
</dbReference>
<dbReference type="GO" id="GO:0003852">
    <property type="term" value="F:2-isopropylmalate synthase activity"/>
    <property type="evidence" value="ECO:0007669"/>
    <property type="project" value="UniProtKB-UniRule"/>
</dbReference>
<dbReference type="GO" id="GO:0003985">
    <property type="term" value="F:acetyl-CoA C-acetyltransferase activity"/>
    <property type="evidence" value="ECO:0007669"/>
    <property type="project" value="UniProtKB-UniRule"/>
</dbReference>
<dbReference type="GO" id="GO:0030145">
    <property type="term" value="F:manganese ion binding"/>
    <property type="evidence" value="ECO:0007669"/>
    <property type="project" value="UniProtKB-UniRule"/>
</dbReference>
<dbReference type="GO" id="GO:0009098">
    <property type="term" value="P:L-leucine biosynthetic process"/>
    <property type="evidence" value="ECO:0007669"/>
    <property type="project" value="UniProtKB-UniRule"/>
</dbReference>
<dbReference type="CDD" id="cd07940">
    <property type="entry name" value="DRE_TIM_IPMS"/>
    <property type="match status" value="1"/>
</dbReference>
<dbReference type="FunFam" id="1.10.238.260:FF:000001">
    <property type="entry name" value="2-isopropylmalate synthase"/>
    <property type="match status" value="1"/>
</dbReference>
<dbReference type="FunFam" id="3.20.20.70:FF:000287">
    <property type="entry name" value="2-isopropylmalate synthase"/>
    <property type="match status" value="1"/>
</dbReference>
<dbReference type="FunFam" id="3.30.160.270:FF:000003">
    <property type="entry name" value="2-isopropylmalate synthase"/>
    <property type="match status" value="1"/>
</dbReference>
<dbReference type="Gene3D" id="1.10.238.260">
    <property type="match status" value="1"/>
</dbReference>
<dbReference type="Gene3D" id="3.30.160.270">
    <property type="match status" value="1"/>
</dbReference>
<dbReference type="Gene3D" id="3.20.20.70">
    <property type="entry name" value="Aldolase class I"/>
    <property type="match status" value="1"/>
</dbReference>
<dbReference type="HAMAP" id="MF_01025">
    <property type="entry name" value="LeuA_type1"/>
    <property type="match status" value="1"/>
</dbReference>
<dbReference type="InterPro" id="IPR050073">
    <property type="entry name" value="2-IPM_HCS-like"/>
</dbReference>
<dbReference type="InterPro" id="IPR013709">
    <property type="entry name" value="2-isopropylmalate_synth_dimer"/>
</dbReference>
<dbReference type="InterPro" id="IPR002034">
    <property type="entry name" value="AIPM/Hcit_synth_CS"/>
</dbReference>
<dbReference type="InterPro" id="IPR013785">
    <property type="entry name" value="Aldolase_TIM"/>
</dbReference>
<dbReference type="InterPro" id="IPR054691">
    <property type="entry name" value="LeuA/HCS_post-cat"/>
</dbReference>
<dbReference type="InterPro" id="IPR036230">
    <property type="entry name" value="LeuA_allosteric_dom_sf"/>
</dbReference>
<dbReference type="InterPro" id="IPR005671">
    <property type="entry name" value="LeuA_bact_synth"/>
</dbReference>
<dbReference type="InterPro" id="IPR000891">
    <property type="entry name" value="PYR_CT"/>
</dbReference>
<dbReference type="NCBIfam" id="TIGR00973">
    <property type="entry name" value="leuA_bact"/>
    <property type="match status" value="1"/>
</dbReference>
<dbReference type="NCBIfam" id="NF002086">
    <property type="entry name" value="PRK00915.1-3"/>
    <property type="match status" value="1"/>
</dbReference>
<dbReference type="NCBIfam" id="NF002088">
    <property type="entry name" value="PRK00915.1-5"/>
    <property type="match status" value="1"/>
</dbReference>
<dbReference type="PANTHER" id="PTHR10277:SF9">
    <property type="entry name" value="2-ISOPROPYLMALATE SYNTHASE 1, CHLOROPLASTIC-RELATED"/>
    <property type="match status" value="1"/>
</dbReference>
<dbReference type="PANTHER" id="PTHR10277">
    <property type="entry name" value="HOMOCITRATE SYNTHASE-RELATED"/>
    <property type="match status" value="1"/>
</dbReference>
<dbReference type="Pfam" id="PF22617">
    <property type="entry name" value="HCS_D2"/>
    <property type="match status" value="1"/>
</dbReference>
<dbReference type="Pfam" id="PF00682">
    <property type="entry name" value="HMGL-like"/>
    <property type="match status" value="1"/>
</dbReference>
<dbReference type="Pfam" id="PF08502">
    <property type="entry name" value="LeuA_dimer"/>
    <property type="match status" value="1"/>
</dbReference>
<dbReference type="SMART" id="SM00917">
    <property type="entry name" value="LeuA_dimer"/>
    <property type="match status" value="1"/>
</dbReference>
<dbReference type="SUPFAM" id="SSF110921">
    <property type="entry name" value="2-isopropylmalate synthase LeuA, allosteric (dimerisation) domain"/>
    <property type="match status" value="1"/>
</dbReference>
<dbReference type="SUPFAM" id="SSF51569">
    <property type="entry name" value="Aldolase"/>
    <property type="match status" value="1"/>
</dbReference>
<dbReference type="PROSITE" id="PS00815">
    <property type="entry name" value="AIPM_HOMOCIT_SYNTH_1"/>
    <property type="match status" value="1"/>
</dbReference>
<dbReference type="PROSITE" id="PS00816">
    <property type="entry name" value="AIPM_HOMOCIT_SYNTH_2"/>
    <property type="match status" value="1"/>
</dbReference>
<dbReference type="PROSITE" id="PS50991">
    <property type="entry name" value="PYR_CT"/>
    <property type="match status" value="1"/>
</dbReference>
<reference key="1">
    <citation type="submission" date="2008-10" db="EMBL/GenBank/DDBJ databases">
        <title>Genome sequence of Bacillus cereus AH820.</title>
        <authorList>
            <person name="Dodson R.J."/>
            <person name="Durkin A.S."/>
            <person name="Rosovitz M.J."/>
            <person name="Rasko D.A."/>
            <person name="Hoffmaster A."/>
            <person name="Ravel J."/>
            <person name="Sutton G."/>
        </authorList>
    </citation>
    <scope>NUCLEOTIDE SEQUENCE [LARGE SCALE GENOMIC DNA]</scope>
    <source>
        <strain>AH820</strain>
    </source>
</reference>
<sequence length="506" mass="55385">MKQILFMDTTLRDGEQSPGVNLNEQEKLQIARQLERLGIHVMEAGFAAASEGDFQSVKRIANTIQNATVMSLARAKESDIRRAYEAVKGAVSPRLHVFLATSDIHMKYKLCMSKEDVLDSIYRSVTLGKSLFPTVQFSAEDATRTARDFLAEAVEVAIRAGANVINIPDTVGYTNPEEYYALFKYLQESVPSYEKAIFSCHCHDDLGMAVANSLAAVEGGALQVEGTINGIGERAGNAALEEVAVALHIRKDFYKAEPSMTLKEIKATSTLVSRLTGMVVPKNKAIVGANAFAHESGIHQDGVLKEVTTYEIIEPALVGESQNLFVLGKHSGRHAFTEKMKELGYEFTNDERDAVFEAFKKLADRKKEITEEDLRALMLGEAAFAAQQYNITQLQVHFVSNSTQCATVVLKDEEGNVFEDAATGSGSIEAIYNAIQRILGLECELADYRIQSITQGQDALAHVHVELKEGAHQVSGFGVAQDVLEASARAYVHAAGKLKSFIQLVK</sequence>
<keyword id="KW-0028">Amino-acid biosynthesis</keyword>
<keyword id="KW-0100">Branched-chain amino acid biosynthesis</keyword>
<keyword id="KW-0963">Cytoplasm</keyword>
<keyword id="KW-0432">Leucine biosynthesis</keyword>
<keyword id="KW-0464">Manganese</keyword>
<keyword id="KW-0479">Metal-binding</keyword>
<keyword id="KW-0808">Transferase</keyword>
<accession>B7JFY5</accession>
<name>LEU1_BACC0</name>
<feature type="chain" id="PRO_1000149129" description="2-isopropylmalate synthase">
    <location>
        <begin position="1"/>
        <end position="506"/>
    </location>
</feature>
<feature type="domain" description="Pyruvate carboxyltransferase" evidence="1">
    <location>
        <begin position="4"/>
        <end position="266"/>
    </location>
</feature>
<feature type="region of interest" description="Regulatory domain" evidence="1">
    <location>
        <begin position="390"/>
        <end position="506"/>
    </location>
</feature>
<feature type="binding site" evidence="1">
    <location>
        <position position="13"/>
    </location>
    <ligand>
        <name>Mn(2+)</name>
        <dbReference type="ChEBI" id="CHEBI:29035"/>
    </ligand>
</feature>
<feature type="binding site" evidence="1">
    <location>
        <position position="201"/>
    </location>
    <ligand>
        <name>Mn(2+)</name>
        <dbReference type="ChEBI" id="CHEBI:29035"/>
    </ligand>
</feature>
<feature type="binding site" evidence="1">
    <location>
        <position position="203"/>
    </location>
    <ligand>
        <name>Mn(2+)</name>
        <dbReference type="ChEBI" id="CHEBI:29035"/>
    </ligand>
</feature>
<feature type="binding site" evidence="1">
    <location>
        <position position="237"/>
    </location>
    <ligand>
        <name>Mn(2+)</name>
        <dbReference type="ChEBI" id="CHEBI:29035"/>
    </ligand>
</feature>
<comment type="function">
    <text evidence="1">Catalyzes the condensation of the acetyl group of acetyl-CoA with 3-methyl-2-oxobutanoate (2-ketoisovalerate) to form 3-carboxy-3-hydroxy-4-methylpentanoate (2-isopropylmalate).</text>
</comment>
<comment type="catalytic activity">
    <reaction evidence="1">
        <text>3-methyl-2-oxobutanoate + acetyl-CoA + H2O = (2S)-2-isopropylmalate + CoA + H(+)</text>
        <dbReference type="Rhea" id="RHEA:21524"/>
        <dbReference type="ChEBI" id="CHEBI:1178"/>
        <dbReference type="ChEBI" id="CHEBI:11851"/>
        <dbReference type="ChEBI" id="CHEBI:15377"/>
        <dbReference type="ChEBI" id="CHEBI:15378"/>
        <dbReference type="ChEBI" id="CHEBI:57287"/>
        <dbReference type="ChEBI" id="CHEBI:57288"/>
        <dbReference type="EC" id="2.3.3.13"/>
    </reaction>
</comment>
<comment type="cofactor">
    <cofactor evidence="1">
        <name>Mn(2+)</name>
        <dbReference type="ChEBI" id="CHEBI:29035"/>
    </cofactor>
</comment>
<comment type="pathway">
    <text evidence="1">Amino-acid biosynthesis; L-leucine biosynthesis; L-leucine from 3-methyl-2-oxobutanoate: step 1/4.</text>
</comment>
<comment type="subunit">
    <text evidence="1">Homodimer.</text>
</comment>
<comment type="subcellular location">
    <subcellularLocation>
        <location evidence="1">Cytoplasm</location>
    </subcellularLocation>
</comment>
<comment type="similarity">
    <text evidence="1">Belongs to the alpha-IPM synthase/homocitrate synthase family. LeuA type 1 subfamily.</text>
</comment>
<gene>
    <name evidence="1" type="primary">leuA</name>
    <name type="ordered locus">BCAH820_1491</name>
</gene>
<evidence type="ECO:0000255" key="1">
    <source>
        <dbReference type="HAMAP-Rule" id="MF_01025"/>
    </source>
</evidence>